<reference key="1">
    <citation type="submission" date="2007-03" db="EMBL/GenBank/DDBJ databases">
        <title>Complete sequence of Desulfotomaculum reducens MI-1.</title>
        <authorList>
            <consortium name="US DOE Joint Genome Institute"/>
            <person name="Copeland A."/>
            <person name="Lucas S."/>
            <person name="Lapidus A."/>
            <person name="Barry K."/>
            <person name="Detter J.C."/>
            <person name="Glavina del Rio T."/>
            <person name="Hammon N."/>
            <person name="Israni S."/>
            <person name="Dalin E."/>
            <person name="Tice H."/>
            <person name="Pitluck S."/>
            <person name="Sims D."/>
            <person name="Brettin T."/>
            <person name="Bruce D."/>
            <person name="Han C."/>
            <person name="Tapia R."/>
            <person name="Schmutz J."/>
            <person name="Larimer F."/>
            <person name="Land M."/>
            <person name="Hauser L."/>
            <person name="Kyrpides N."/>
            <person name="Kim E."/>
            <person name="Tebo B.M."/>
            <person name="Richardson P."/>
        </authorList>
    </citation>
    <scope>NUCLEOTIDE SEQUENCE [LARGE SCALE GENOMIC DNA]</scope>
    <source>
        <strain>ATCC BAA-1160 / DSM 100696 / MI-1</strain>
    </source>
</reference>
<evidence type="ECO:0000255" key="1">
    <source>
        <dbReference type="HAMAP-Rule" id="MF_00186"/>
    </source>
</evidence>
<protein>
    <recommendedName>
        <fullName evidence="1">Glycerol kinase</fullName>
        <ecNumber evidence="1">2.7.1.30</ecNumber>
    </recommendedName>
    <alternativeName>
        <fullName evidence="1">ATP:glycerol 3-phosphotransferase</fullName>
    </alternativeName>
    <alternativeName>
        <fullName evidence="1">Glycerokinase</fullName>
        <shortName evidence="1">GK</shortName>
    </alternativeName>
</protein>
<name>GLPK_DESRM</name>
<comment type="function">
    <text evidence="1">Key enzyme in the regulation of glycerol uptake and metabolism. Catalyzes the phosphorylation of glycerol to yield sn-glycerol 3-phosphate.</text>
</comment>
<comment type="catalytic activity">
    <reaction evidence="1">
        <text>glycerol + ATP = sn-glycerol 3-phosphate + ADP + H(+)</text>
        <dbReference type="Rhea" id="RHEA:21644"/>
        <dbReference type="ChEBI" id="CHEBI:15378"/>
        <dbReference type="ChEBI" id="CHEBI:17754"/>
        <dbReference type="ChEBI" id="CHEBI:30616"/>
        <dbReference type="ChEBI" id="CHEBI:57597"/>
        <dbReference type="ChEBI" id="CHEBI:456216"/>
        <dbReference type="EC" id="2.7.1.30"/>
    </reaction>
</comment>
<comment type="activity regulation">
    <text evidence="1">Activated by phosphorylation and inhibited by fructose 1,6-bisphosphate (FBP).</text>
</comment>
<comment type="pathway">
    <text evidence="1">Polyol metabolism; glycerol degradation via glycerol kinase pathway; sn-glycerol 3-phosphate from glycerol: step 1/1.</text>
</comment>
<comment type="subunit">
    <text evidence="1">Homotetramer and homodimer (in equilibrium).</text>
</comment>
<comment type="similarity">
    <text evidence="1">Belongs to the FGGY kinase family.</text>
</comment>
<gene>
    <name evidence="1" type="primary">glpK</name>
    <name type="ordered locus">Dred_2845</name>
</gene>
<proteinExistence type="inferred from homology"/>
<keyword id="KW-0067">ATP-binding</keyword>
<keyword id="KW-0319">Glycerol metabolism</keyword>
<keyword id="KW-0418">Kinase</keyword>
<keyword id="KW-0547">Nucleotide-binding</keyword>
<keyword id="KW-1185">Reference proteome</keyword>
<keyword id="KW-0808">Transferase</keyword>
<dbReference type="EC" id="2.7.1.30" evidence="1"/>
<dbReference type="EMBL" id="CP000612">
    <property type="protein sequence ID" value="ABO51349.1"/>
    <property type="molecule type" value="Genomic_DNA"/>
</dbReference>
<dbReference type="SMR" id="A4J8E6"/>
<dbReference type="STRING" id="349161.Dred_2845"/>
<dbReference type="KEGG" id="drm:Dred_2845"/>
<dbReference type="eggNOG" id="COG0554">
    <property type="taxonomic scope" value="Bacteria"/>
</dbReference>
<dbReference type="HOGENOM" id="CLU_009281_2_3_9"/>
<dbReference type="UniPathway" id="UPA00618">
    <property type="reaction ID" value="UER00672"/>
</dbReference>
<dbReference type="Proteomes" id="UP000001556">
    <property type="component" value="Chromosome"/>
</dbReference>
<dbReference type="GO" id="GO:0005829">
    <property type="term" value="C:cytosol"/>
    <property type="evidence" value="ECO:0007669"/>
    <property type="project" value="TreeGrafter"/>
</dbReference>
<dbReference type="GO" id="GO:0005524">
    <property type="term" value="F:ATP binding"/>
    <property type="evidence" value="ECO:0007669"/>
    <property type="project" value="UniProtKB-UniRule"/>
</dbReference>
<dbReference type="GO" id="GO:0004370">
    <property type="term" value="F:glycerol kinase activity"/>
    <property type="evidence" value="ECO:0000250"/>
    <property type="project" value="UniProtKB"/>
</dbReference>
<dbReference type="GO" id="GO:0019563">
    <property type="term" value="P:glycerol catabolic process"/>
    <property type="evidence" value="ECO:0007669"/>
    <property type="project" value="UniProtKB-UniRule"/>
</dbReference>
<dbReference type="GO" id="GO:0006071">
    <property type="term" value="P:glycerol metabolic process"/>
    <property type="evidence" value="ECO:0000250"/>
    <property type="project" value="UniProtKB"/>
</dbReference>
<dbReference type="GO" id="GO:0006072">
    <property type="term" value="P:glycerol-3-phosphate metabolic process"/>
    <property type="evidence" value="ECO:0007669"/>
    <property type="project" value="InterPro"/>
</dbReference>
<dbReference type="CDD" id="cd07786">
    <property type="entry name" value="FGGY_EcGK_like"/>
    <property type="match status" value="1"/>
</dbReference>
<dbReference type="FunFam" id="3.30.420.40:FF:000007">
    <property type="entry name" value="Glycerol kinase"/>
    <property type="match status" value="1"/>
</dbReference>
<dbReference type="FunFam" id="3.30.420.40:FF:000008">
    <property type="entry name" value="Glycerol kinase"/>
    <property type="match status" value="1"/>
</dbReference>
<dbReference type="Gene3D" id="3.30.420.40">
    <property type="match status" value="2"/>
</dbReference>
<dbReference type="HAMAP" id="MF_00186">
    <property type="entry name" value="Glycerol_kin"/>
    <property type="match status" value="1"/>
</dbReference>
<dbReference type="InterPro" id="IPR043129">
    <property type="entry name" value="ATPase_NBD"/>
</dbReference>
<dbReference type="InterPro" id="IPR000577">
    <property type="entry name" value="Carb_kinase_FGGY"/>
</dbReference>
<dbReference type="InterPro" id="IPR018483">
    <property type="entry name" value="Carb_kinase_FGGY_CS"/>
</dbReference>
<dbReference type="InterPro" id="IPR018485">
    <property type="entry name" value="FGGY_C"/>
</dbReference>
<dbReference type="InterPro" id="IPR018484">
    <property type="entry name" value="FGGY_N"/>
</dbReference>
<dbReference type="InterPro" id="IPR005999">
    <property type="entry name" value="Glycerol_kin"/>
</dbReference>
<dbReference type="NCBIfam" id="TIGR01311">
    <property type="entry name" value="glycerol_kin"/>
    <property type="match status" value="1"/>
</dbReference>
<dbReference type="NCBIfam" id="NF000756">
    <property type="entry name" value="PRK00047.1"/>
    <property type="match status" value="1"/>
</dbReference>
<dbReference type="PANTHER" id="PTHR10196:SF69">
    <property type="entry name" value="GLYCEROL KINASE"/>
    <property type="match status" value="1"/>
</dbReference>
<dbReference type="PANTHER" id="PTHR10196">
    <property type="entry name" value="SUGAR KINASE"/>
    <property type="match status" value="1"/>
</dbReference>
<dbReference type="Pfam" id="PF02782">
    <property type="entry name" value="FGGY_C"/>
    <property type="match status" value="1"/>
</dbReference>
<dbReference type="Pfam" id="PF00370">
    <property type="entry name" value="FGGY_N"/>
    <property type="match status" value="1"/>
</dbReference>
<dbReference type="PIRSF" id="PIRSF000538">
    <property type="entry name" value="GlpK"/>
    <property type="match status" value="1"/>
</dbReference>
<dbReference type="SUPFAM" id="SSF53067">
    <property type="entry name" value="Actin-like ATPase domain"/>
    <property type="match status" value="2"/>
</dbReference>
<dbReference type="PROSITE" id="PS00933">
    <property type="entry name" value="FGGY_KINASES_1"/>
    <property type="match status" value="1"/>
</dbReference>
<dbReference type="PROSITE" id="PS00445">
    <property type="entry name" value="FGGY_KINASES_2"/>
    <property type="match status" value="1"/>
</dbReference>
<organism>
    <name type="scientific">Desulforamulus reducens (strain ATCC BAA-1160 / DSM 100696 / MI-1)</name>
    <name type="common">Desulfotomaculum reducens</name>
    <dbReference type="NCBI Taxonomy" id="349161"/>
    <lineage>
        <taxon>Bacteria</taxon>
        <taxon>Bacillati</taxon>
        <taxon>Bacillota</taxon>
        <taxon>Clostridia</taxon>
        <taxon>Eubacteriales</taxon>
        <taxon>Peptococcaceae</taxon>
        <taxon>Desulforamulus</taxon>
    </lineage>
</organism>
<feature type="chain" id="PRO_1000203951" description="Glycerol kinase">
    <location>
        <begin position="1"/>
        <end position="501"/>
    </location>
</feature>
<feature type="binding site" evidence="1">
    <location>
        <position position="14"/>
    </location>
    <ligand>
        <name>ADP</name>
        <dbReference type="ChEBI" id="CHEBI:456216"/>
    </ligand>
</feature>
<feature type="binding site" evidence="1">
    <location>
        <position position="14"/>
    </location>
    <ligand>
        <name>ATP</name>
        <dbReference type="ChEBI" id="CHEBI:30616"/>
    </ligand>
</feature>
<feature type="binding site" evidence="1">
    <location>
        <position position="14"/>
    </location>
    <ligand>
        <name>sn-glycerol 3-phosphate</name>
        <dbReference type="ChEBI" id="CHEBI:57597"/>
    </ligand>
</feature>
<feature type="binding site" evidence="1">
    <location>
        <position position="15"/>
    </location>
    <ligand>
        <name>ATP</name>
        <dbReference type="ChEBI" id="CHEBI:30616"/>
    </ligand>
</feature>
<feature type="binding site" evidence="1">
    <location>
        <position position="16"/>
    </location>
    <ligand>
        <name>ATP</name>
        <dbReference type="ChEBI" id="CHEBI:30616"/>
    </ligand>
</feature>
<feature type="binding site" evidence="1">
    <location>
        <position position="18"/>
    </location>
    <ligand>
        <name>ADP</name>
        <dbReference type="ChEBI" id="CHEBI:456216"/>
    </ligand>
</feature>
<feature type="binding site" evidence="1">
    <location>
        <position position="84"/>
    </location>
    <ligand>
        <name>glycerol</name>
        <dbReference type="ChEBI" id="CHEBI:17754"/>
    </ligand>
</feature>
<feature type="binding site" evidence="1">
    <location>
        <position position="84"/>
    </location>
    <ligand>
        <name>sn-glycerol 3-phosphate</name>
        <dbReference type="ChEBI" id="CHEBI:57597"/>
    </ligand>
</feature>
<feature type="binding site" evidence="1">
    <location>
        <position position="85"/>
    </location>
    <ligand>
        <name>glycerol</name>
        <dbReference type="ChEBI" id="CHEBI:17754"/>
    </ligand>
</feature>
<feature type="binding site" evidence="1">
    <location>
        <position position="85"/>
    </location>
    <ligand>
        <name>sn-glycerol 3-phosphate</name>
        <dbReference type="ChEBI" id="CHEBI:57597"/>
    </ligand>
</feature>
<feature type="binding site" evidence="1">
    <location>
        <position position="136"/>
    </location>
    <ligand>
        <name>glycerol</name>
        <dbReference type="ChEBI" id="CHEBI:17754"/>
    </ligand>
</feature>
<feature type="binding site" evidence="1">
    <location>
        <position position="136"/>
    </location>
    <ligand>
        <name>sn-glycerol 3-phosphate</name>
        <dbReference type="ChEBI" id="CHEBI:57597"/>
    </ligand>
</feature>
<feature type="binding site" evidence="1">
    <location>
        <position position="246"/>
    </location>
    <ligand>
        <name>glycerol</name>
        <dbReference type="ChEBI" id="CHEBI:17754"/>
    </ligand>
</feature>
<feature type="binding site" evidence="1">
    <location>
        <position position="246"/>
    </location>
    <ligand>
        <name>sn-glycerol 3-phosphate</name>
        <dbReference type="ChEBI" id="CHEBI:57597"/>
    </ligand>
</feature>
<feature type="binding site" evidence="1">
    <location>
        <position position="247"/>
    </location>
    <ligand>
        <name>glycerol</name>
        <dbReference type="ChEBI" id="CHEBI:17754"/>
    </ligand>
</feature>
<feature type="binding site" evidence="1">
    <location>
        <position position="268"/>
    </location>
    <ligand>
        <name>ADP</name>
        <dbReference type="ChEBI" id="CHEBI:456216"/>
    </ligand>
</feature>
<feature type="binding site" evidence="1">
    <location>
        <position position="268"/>
    </location>
    <ligand>
        <name>ATP</name>
        <dbReference type="ChEBI" id="CHEBI:30616"/>
    </ligand>
</feature>
<feature type="binding site" evidence="1">
    <location>
        <position position="311"/>
    </location>
    <ligand>
        <name>ADP</name>
        <dbReference type="ChEBI" id="CHEBI:456216"/>
    </ligand>
</feature>
<feature type="binding site" evidence="1">
    <location>
        <position position="311"/>
    </location>
    <ligand>
        <name>ATP</name>
        <dbReference type="ChEBI" id="CHEBI:30616"/>
    </ligand>
</feature>
<feature type="binding site" evidence="1">
    <location>
        <position position="315"/>
    </location>
    <ligand>
        <name>ATP</name>
        <dbReference type="ChEBI" id="CHEBI:30616"/>
    </ligand>
</feature>
<feature type="binding site" evidence="1">
    <location>
        <position position="412"/>
    </location>
    <ligand>
        <name>ADP</name>
        <dbReference type="ChEBI" id="CHEBI:456216"/>
    </ligand>
</feature>
<feature type="binding site" evidence="1">
    <location>
        <position position="412"/>
    </location>
    <ligand>
        <name>ATP</name>
        <dbReference type="ChEBI" id="CHEBI:30616"/>
    </ligand>
</feature>
<feature type="binding site" evidence="1">
    <location>
        <position position="416"/>
    </location>
    <ligand>
        <name>ADP</name>
        <dbReference type="ChEBI" id="CHEBI:456216"/>
    </ligand>
</feature>
<accession>A4J8E6</accession>
<sequence>MMAKKYVLALDQGTTSCRAILFDRDSNIVGVAQKEFTQIYPKPGWVEHNAEEIWSTQYGVIAEVVAKTGIKPEEIASIGITNQRETTVVWNKNTGKPVYNAIVWQCRRTTEICDELKVKGLEETFKKKTGLVVDAYFSGTKVKWILDNVPGTREMAEKGELLFGTMDTWLIWKLTGGQVHVTDYSNASRTLMYNIRELCWDEELLGYLNVPMSLLPTVKASSEVYGYTQPDQFLGHSVPIAGVAGDQQAALFGQACYEPGMAKNTYGTGCFMLMNTGDEVYESKNGLLTTIAWGLDGKVTYALEGSIFIAGAAIQWLRDGLKILESAPDSEYFASKVDGTDGVYLVPAFAGLGAPYWDMRARGAIVGLTRGTTKEHIIRAALDSLAYQTKDVLGAMEADSNIKLQALKVDGGAVANNLLMQFQADILGVPVERPQVIETTALGAAYLAGLAVGFWESKEELAKRWKLDYQFESVMAEDQRNKLYNGWEKAVGRSMDWATEE</sequence>